<keyword id="KW-0028">Amino-acid biosynthesis</keyword>
<keyword id="KW-0963">Cytoplasm</keyword>
<keyword id="KW-0368">Histidine biosynthesis</keyword>
<keyword id="KW-0456">Lyase</keyword>
<keyword id="KW-1185">Reference proteome</keyword>
<proteinExistence type="inferred from homology"/>
<dbReference type="EC" id="4.3.2.10" evidence="1"/>
<dbReference type="EMBL" id="CR931997">
    <property type="protein sequence ID" value="CAI36955.1"/>
    <property type="molecule type" value="Genomic_DNA"/>
</dbReference>
<dbReference type="RefSeq" id="WP_011273397.1">
    <property type="nucleotide sequence ID" value="NC_007164.1"/>
</dbReference>
<dbReference type="SMR" id="Q4JW52"/>
<dbReference type="STRING" id="306537.jk0793"/>
<dbReference type="KEGG" id="cjk:jk0793"/>
<dbReference type="PATRIC" id="fig|306537.10.peg.802"/>
<dbReference type="eggNOG" id="COG0107">
    <property type="taxonomic scope" value="Bacteria"/>
</dbReference>
<dbReference type="HOGENOM" id="CLU_048577_4_0_11"/>
<dbReference type="OrthoDB" id="9781903at2"/>
<dbReference type="UniPathway" id="UPA00031">
    <property type="reaction ID" value="UER00010"/>
</dbReference>
<dbReference type="Proteomes" id="UP000000545">
    <property type="component" value="Chromosome"/>
</dbReference>
<dbReference type="GO" id="GO:0005737">
    <property type="term" value="C:cytoplasm"/>
    <property type="evidence" value="ECO:0007669"/>
    <property type="project" value="UniProtKB-SubCell"/>
</dbReference>
<dbReference type="GO" id="GO:0000107">
    <property type="term" value="F:imidazoleglycerol-phosphate synthase activity"/>
    <property type="evidence" value="ECO:0007669"/>
    <property type="project" value="UniProtKB-UniRule"/>
</dbReference>
<dbReference type="GO" id="GO:0016829">
    <property type="term" value="F:lyase activity"/>
    <property type="evidence" value="ECO:0007669"/>
    <property type="project" value="UniProtKB-KW"/>
</dbReference>
<dbReference type="GO" id="GO:0000105">
    <property type="term" value="P:L-histidine biosynthetic process"/>
    <property type="evidence" value="ECO:0007669"/>
    <property type="project" value="UniProtKB-UniRule"/>
</dbReference>
<dbReference type="CDD" id="cd04731">
    <property type="entry name" value="HisF"/>
    <property type="match status" value="1"/>
</dbReference>
<dbReference type="FunFam" id="3.20.20.70:FF:000006">
    <property type="entry name" value="Imidazole glycerol phosphate synthase subunit HisF"/>
    <property type="match status" value="1"/>
</dbReference>
<dbReference type="Gene3D" id="3.20.20.70">
    <property type="entry name" value="Aldolase class I"/>
    <property type="match status" value="1"/>
</dbReference>
<dbReference type="HAMAP" id="MF_01013">
    <property type="entry name" value="HisF"/>
    <property type="match status" value="1"/>
</dbReference>
<dbReference type="InterPro" id="IPR013785">
    <property type="entry name" value="Aldolase_TIM"/>
</dbReference>
<dbReference type="InterPro" id="IPR006062">
    <property type="entry name" value="His_biosynth"/>
</dbReference>
<dbReference type="InterPro" id="IPR004651">
    <property type="entry name" value="HisF"/>
</dbReference>
<dbReference type="InterPro" id="IPR050064">
    <property type="entry name" value="IGPS_HisA/HisF"/>
</dbReference>
<dbReference type="InterPro" id="IPR011060">
    <property type="entry name" value="RibuloseP-bd_barrel"/>
</dbReference>
<dbReference type="NCBIfam" id="TIGR00735">
    <property type="entry name" value="hisF"/>
    <property type="match status" value="1"/>
</dbReference>
<dbReference type="PANTHER" id="PTHR21235:SF2">
    <property type="entry name" value="IMIDAZOLE GLYCEROL PHOSPHATE SYNTHASE HISHF"/>
    <property type="match status" value="1"/>
</dbReference>
<dbReference type="PANTHER" id="PTHR21235">
    <property type="entry name" value="IMIDAZOLE GLYCEROL PHOSPHATE SYNTHASE SUBUNIT HISF/H IGP SYNTHASE SUBUNIT HISF/H"/>
    <property type="match status" value="1"/>
</dbReference>
<dbReference type="Pfam" id="PF00977">
    <property type="entry name" value="His_biosynth"/>
    <property type="match status" value="1"/>
</dbReference>
<dbReference type="SUPFAM" id="SSF51366">
    <property type="entry name" value="Ribulose-phoshate binding barrel"/>
    <property type="match status" value="1"/>
</dbReference>
<reference key="1">
    <citation type="journal article" date="2005" name="J. Bacteriol.">
        <title>Complete genome sequence and analysis of the multiresistant nosocomial pathogen Corynebacterium jeikeium K411, a lipid-requiring bacterium of the human skin flora.</title>
        <authorList>
            <person name="Tauch A."/>
            <person name="Kaiser O."/>
            <person name="Hain T."/>
            <person name="Goesmann A."/>
            <person name="Weisshaar B."/>
            <person name="Albersmeier A."/>
            <person name="Bekel T."/>
            <person name="Bischoff N."/>
            <person name="Brune I."/>
            <person name="Chakraborty T."/>
            <person name="Kalinowski J."/>
            <person name="Meyer F."/>
            <person name="Rupp O."/>
            <person name="Schneiker S."/>
            <person name="Viehoever P."/>
            <person name="Puehler A."/>
        </authorList>
    </citation>
    <scope>NUCLEOTIDE SEQUENCE [LARGE SCALE GENOMIC DNA]</scope>
    <source>
        <strain>K411</strain>
    </source>
</reference>
<accession>Q4JW52</accession>
<name>HIS6_CORJK</name>
<protein>
    <recommendedName>
        <fullName evidence="1">Imidazole glycerol phosphate synthase subunit HisF</fullName>
        <ecNumber evidence="1">4.3.2.10</ecNumber>
    </recommendedName>
    <alternativeName>
        <fullName evidence="1">IGP synthase cyclase subunit</fullName>
    </alternativeName>
    <alternativeName>
        <fullName evidence="1">IGP synthase subunit HisF</fullName>
    </alternativeName>
    <alternativeName>
        <fullName evidence="1">ImGP synthase subunit HisF</fullName>
        <shortName evidence="1">IGPS subunit HisF</shortName>
    </alternativeName>
</protein>
<gene>
    <name evidence="1" type="primary">hisF</name>
    <name type="ordered locus">jk0793</name>
</gene>
<evidence type="ECO:0000255" key="1">
    <source>
        <dbReference type="HAMAP-Rule" id="MF_01013"/>
    </source>
</evidence>
<sequence length="260" mass="27413">MSVTVRVIPCLDVDNGRVVKGVNFEGLRDAGDPVELAKRYDALGADELTFLDVSASKDGRGTMLDVVRHTADQVFIPLTVGGGVRSEEDVDALLRAGADKVSVNSSAVARPELLRELSQRFGAQCIVLSVDARRVKDPVEADKYPSGFEVTTHGGTKSAGLDAIEWARKGEELGVGEILLNSMDGDGTKAGFDIEMLQAVRKAVSIPVIASGGAGAPDHFPPAVEAGADAVLAASIFHFGEVEIREVKQALADAGYEVRL</sequence>
<feature type="chain" id="PRO_0000142149" description="Imidazole glycerol phosphate synthase subunit HisF">
    <location>
        <begin position="1"/>
        <end position="260"/>
    </location>
</feature>
<feature type="active site" evidence="1">
    <location>
        <position position="12"/>
    </location>
</feature>
<feature type="active site" evidence="1">
    <location>
        <position position="131"/>
    </location>
</feature>
<comment type="function">
    <text evidence="1">IGPS catalyzes the conversion of PRFAR and glutamine to IGP, AICAR and glutamate. The HisF subunit catalyzes the cyclization activity that produces IGP and AICAR from PRFAR using the ammonia provided by the HisH subunit.</text>
</comment>
<comment type="catalytic activity">
    <reaction evidence="1">
        <text>5-[(5-phospho-1-deoxy-D-ribulos-1-ylimino)methylamino]-1-(5-phospho-beta-D-ribosyl)imidazole-4-carboxamide + L-glutamine = D-erythro-1-(imidazol-4-yl)glycerol 3-phosphate + 5-amino-1-(5-phospho-beta-D-ribosyl)imidazole-4-carboxamide + L-glutamate + H(+)</text>
        <dbReference type="Rhea" id="RHEA:24793"/>
        <dbReference type="ChEBI" id="CHEBI:15378"/>
        <dbReference type="ChEBI" id="CHEBI:29985"/>
        <dbReference type="ChEBI" id="CHEBI:58278"/>
        <dbReference type="ChEBI" id="CHEBI:58359"/>
        <dbReference type="ChEBI" id="CHEBI:58475"/>
        <dbReference type="ChEBI" id="CHEBI:58525"/>
        <dbReference type="EC" id="4.3.2.10"/>
    </reaction>
</comment>
<comment type="pathway">
    <text evidence="1">Amino-acid biosynthesis; L-histidine biosynthesis; L-histidine from 5-phospho-alpha-D-ribose 1-diphosphate: step 5/9.</text>
</comment>
<comment type="subunit">
    <text evidence="1">Heterodimer of HisH and HisF.</text>
</comment>
<comment type="subcellular location">
    <subcellularLocation>
        <location evidence="1">Cytoplasm</location>
    </subcellularLocation>
</comment>
<comment type="similarity">
    <text evidence="1">Belongs to the HisA/HisF family.</text>
</comment>
<organism>
    <name type="scientific">Corynebacterium jeikeium (strain K411)</name>
    <dbReference type="NCBI Taxonomy" id="306537"/>
    <lineage>
        <taxon>Bacteria</taxon>
        <taxon>Bacillati</taxon>
        <taxon>Actinomycetota</taxon>
        <taxon>Actinomycetes</taxon>
        <taxon>Mycobacteriales</taxon>
        <taxon>Corynebacteriaceae</taxon>
        <taxon>Corynebacterium</taxon>
    </lineage>
</organism>